<keyword id="KW-0067">ATP-binding</keyword>
<keyword id="KW-0963">Cytoplasm</keyword>
<keyword id="KW-0436">Ligase</keyword>
<keyword id="KW-0547">Nucleotide-binding</keyword>
<keyword id="KW-0658">Purine biosynthesis</keyword>
<keyword id="KW-1185">Reference proteome</keyword>
<proteinExistence type="inferred from homology"/>
<organism>
    <name type="scientific">Actinobacillus pleuropneumoniae serotype 5b (strain L20)</name>
    <dbReference type="NCBI Taxonomy" id="416269"/>
    <lineage>
        <taxon>Bacteria</taxon>
        <taxon>Pseudomonadati</taxon>
        <taxon>Pseudomonadota</taxon>
        <taxon>Gammaproteobacteria</taxon>
        <taxon>Pasteurellales</taxon>
        <taxon>Pasteurellaceae</taxon>
        <taxon>Actinobacillus</taxon>
    </lineage>
</organism>
<comment type="catalytic activity">
    <reaction evidence="1">
        <text>2-formamido-N(1)-(5-O-phospho-beta-D-ribosyl)acetamidine + ATP = 5-amino-1-(5-phospho-beta-D-ribosyl)imidazole + ADP + phosphate + H(+)</text>
        <dbReference type="Rhea" id="RHEA:23032"/>
        <dbReference type="ChEBI" id="CHEBI:15378"/>
        <dbReference type="ChEBI" id="CHEBI:30616"/>
        <dbReference type="ChEBI" id="CHEBI:43474"/>
        <dbReference type="ChEBI" id="CHEBI:137981"/>
        <dbReference type="ChEBI" id="CHEBI:147287"/>
        <dbReference type="ChEBI" id="CHEBI:456216"/>
        <dbReference type="EC" id="6.3.3.1"/>
    </reaction>
</comment>
<comment type="pathway">
    <text evidence="1">Purine metabolism; IMP biosynthesis via de novo pathway; 5-amino-1-(5-phospho-D-ribosyl)imidazole from N(2)-formyl-N(1)-(5-phospho-D-ribosyl)glycinamide: step 2/2.</text>
</comment>
<comment type="subcellular location">
    <subcellularLocation>
        <location evidence="1">Cytoplasm</location>
    </subcellularLocation>
</comment>
<comment type="similarity">
    <text evidence="1">Belongs to the AIR synthase family.</text>
</comment>
<accession>A3N1A1</accession>
<name>PUR5_ACTP2</name>
<dbReference type="EC" id="6.3.3.1" evidence="1"/>
<dbReference type="EMBL" id="CP000569">
    <property type="protein sequence ID" value="ABN74187.1"/>
    <property type="molecule type" value="Genomic_DNA"/>
</dbReference>
<dbReference type="RefSeq" id="WP_005597960.1">
    <property type="nucleotide sequence ID" value="NC_009053.1"/>
</dbReference>
<dbReference type="SMR" id="A3N1A1"/>
<dbReference type="STRING" id="416269.APL_1095"/>
<dbReference type="EnsemblBacteria" id="ABN74187">
    <property type="protein sequence ID" value="ABN74187"/>
    <property type="gene ID" value="APL_1095"/>
</dbReference>
<dbReference type="GeneID" id="48599326"/>
<dbReference type="KEGG" id="apl:APL_1095"/>
<dbReference type="eggNOG" id="COG0150">
    <property type="taxonomic scope" value="Bacteria"/>
</dbReference>
<dbReference type="HOGENOM" id="CLU_047116_0_0_6"/>
<dbReference type="UniPathway" id="UPA00074">
    <property type="reaction ID" value="UER00129"/>
</dbReference>
<dbReference type="Proteomes" id="UP000001432">
    <property type="component" value="Chromosome"/>
</dbReference>
<dbReference type="GO" id="GO:0005829">
    <property type="term" value="C:cytosol"/>
    <property type="evidence" value="ECO:0007669"/>
    <property type="project" value="TreeGrafter"/>
</dbReference>
<dbReference type="GO" id="GO:0005524">
    <property type="term" value="F:ATP binding"/>
    <property type="evidence" value="ECO:0007669"/>
    <property type="project" value="UniProtKB-KW"/>
</dbReference>
<dbReference type="GO" id="GO:0004637">
    <property type="term" value="F:phosphoribosylamine-glycine ligase activity"/>
    <property type="evidence" value="ECO:0007669"/>
    <property type="project" value="TreeGrafter"/>
</dbReference>
<dbReference type="GO" id="GO:0004641">
    <property type="term" value="F:phosphoribosylformylglycinamidine cyclo-ligase activity"/>
    <property type="evidence" value="ECO:0007669"/>
    <property type="project" value="UniProtKB-UniRule"/>
</dbReference>
<dbReference type="GO" id="GO:0006189">
    <property type="term" value="P:'de novo' IMP biosynthetic process"/>
    <property type="evidence" value="ECO:0007669"/>
    <property type="project" value="UniProtKB-UniRule"/>
</dbReference>
<dbReference type="GO" id="GO:0046084">
    <property type="term" value="P:adenine biosynthetic process"/>
    <property type="evidence" value="ECO:0007669"/>
    <property type="project" value="TreeGrafter"/>
</dbReference>
<dbReference type="CDD" id="cd02196">
    <property type="entry name" value="PurM"/>
    <property type="match status" value="1"/>
</dbReference>
<dbReference type="FunFam" id="3.30.1330.10:FF:000001">
    <property type="entry name" value="Phosphoribosylformylglycinamidine cyclo-ligase"/>
    <property type="match status" value="1"/>
</dbReference>
<dbReference type="FunFam" id="3.90.650.10:FF:000001">
    <property type="entry name" value="Phosphoribosylformylglycinamidine cyclo-ligase"/>
    <property type="match status" value="1"/>
</dbReference>
<dbReference type="Gene3D" id="3.90.650.10">
    <property type="entry name" value="PurM-like C-terminal domain"/>
    <property type="match status" value="1"/>
</dbReference>
<dbReference type="Gene3D" id="3.30.1330.10">
    <property type="entry name" value="PurM-like, N-terminal domain"/>
    <property type="match status" value="1"/>
</dbReference>
<dbReference type="HAMAP" id="MF_00741">
    <property type="entry name" value="AIRS"/>
    <property type="match status" value="1"/>
</dbReference>
<dbReference type="InterPro" id="IPR010918">
    <property type="entry name" value="PurM-like_C_dom"/>
</dbReference>
<dbReference type="InterPro" id="IPR036676">
    <property type="entry name" value="PurM-like_C_sf"/>
</dbReference>
<dbReference type="InterPro" id="IPR016188">
    <property type="entry name" value="PurM-like_N"/>
</dbReference>
<dbReference type="InterPro" id="IPR036921">
    <property type="entry name" value="PurM-like_N_sf"/>
</dbReference>
<dbReference type="InterPro" id="IPR004733">
    <property type="entry name" value="PurM_cligase"/>
</dbReference>
<dbReference type="NCBIfam" id="TIGR00878">
    <property type="entry name" value="purM"/>
    <property type="match status" value="1"/>
</dbReference>
<dbReference type="PANTHER" id="PTHR10520:SF12">
    <property type="entry name" value="TRIFUNCTIONAL PURINE BIOSYNTHETIC PROTEIN ADENOSINE-3"/>
    <property type="match status" value="1"/>
</dbReference>
<dbReference type="PANTHER" id="PTHR10520">
    <property type="entry name" value="TRIFUNCTIONAL PURINE BIOSYNTHETIC PROTEIN ADENOSINE-3-RELATED"/>
    <property type="match status" value="1"/>
</dbReference>
<dbReference type="Pfam" id="PF00586">
    <property type="entry name" value="AIRS"/>
    <property type="match status" value="1"/>
</dbReference>
<dbReference type="Pfam" id="PF02769">
    <property type="entry name" value="AIRS_C"/>
    <property type="match status" value="1"/>
</dbReference>
<dbReference type="SUPFAM" id="SSF56042">
    <property type="entry name" value="PurM C-terminal domain-like"/>
    <property type="match status" value="1"/>
</dbReference>
<dbReference type="SUPFAM" id="SSF55326">
    <property type="entry name" value="PurM N-terminal domain-like"/>
    <property type="match status" value="1"/>
</dbReference>
<feature type="chain" id="PRO_1000046416" description="Phosphoribosylformylglycinamidine cyclo-ligase">
    <location>
        <begin position="1"/>
        <end position="345"/>
    </location>
</feature>
<reference key="1">
    <citation type="journal article" date="2008" name="J. Bacteriol.">
        <title>The complete genome sequence of Actinobacillus pleuropneumoniae L20 (serotype 5b).</title>
        <authorList>
            <person name="Foote S.J."/>
            <person name="Bosse J.T."/>
            <person name="Bouevitch A.B."/>
            <person name="Langford P.R."/>
            <person name="Young N.M."/>
            <person name="Nash J.H.E."/>
        </authorList>
    </citation>
    <scope>NUCLEOTIDE SEQUENCE [LARGE SCALE GENOMIC DNA]</scope>
    <source>
        <strain>L20</strain>
    </source>
</reference>
<evidence type="ECO:0000255" key="1">
    <source>
        <dbReference type="HAMAP-Rule" id="MF_00741"/>
    </source>
</evidence>
<protein>
    <recommendedName>
        <fullName evidence="1">Phosphoribosylformylglycinamidine cyclo-ligase</fullName>
        <ecNumber evidence="1">6.3.3.1</ecNumber>
    </recommendedName>
    <alternativeName>
        <fullName evidence="1">AIR synthase</fullName>
    </alternativeName>
    <alternativeName>
        <fullName evidence="1">AIRS</fullName>
    </alternativeName>
    <alternativeName>
        <fullName evidence="1">Phosphoribosyl-aminoimidazole synthetase</fullName>
    </alternativeName>
</protein>
<gene>
    <name evidence="1" type="primary">purM</name>
    <name type="ordered locus">APL_1095</name>
</gene>
<sequence length="345" mass="36867">MSNTQLSYKDAGVDIHAGNELVERIKGDVKRTRRPEVMGGLGGFGALCALPTKYKEPILVSGTDGVGTKLRLAIDLNKHDTIGQDLVAMCVNDLVVQGAEPLFFLDYYATGKLEVDVAADVIKGIADGCEISGCALVGGETAEMPGMYHEGDYDLAGFCVGVVEKSEIIDGSAVKAGDVLLALASSGPHSNGYSLIRKVIEVSGANPATDTLEGKPLSEHLLAPTKIYVKSVLQLIKQADVHAIAHLTGGGFWENIPRVLPATAKAVIDEKSWEWPAAFKWLQEKGNISRYEMYRTFNCGVGMVIALPEKDIETALAVLKQAGENAWVIGKIENLGEGSEQVEII</sequence>